<protein>
    <recommendedName>
        <fullName evidence="1">tRNA uridine 5-carboxymethylaminomethyl modification enzyme MnmG</fullName>
    </recommendedName>
    <alternativeName>
        <fullName evidence="1">Glucose-inhibited division protein A</fullName>
    </alternativeName>
</protein>
<reference key="1">
    <citation type="journal article" date="2007" name="Proc. Natl. Acad. Sci. U.S.A.">
        <title>The genome of Syntrophus aciditrophicus: life at the thermodynamic limit of microbial growth.</title>
        <authorList>
            <person name="McInerney M.J."/>
            <person name="Rohlin L."/>
            <person name="Mouttaki H."/>
            <person name="Kim U."/>
            <person name="Krupp R.S."/>
            <person name="Rios-Hernandez L."/>
            <person name="Sieber J."/>
            <person name="Struchtemeyer C.G."/>
            <person name="Bhattacharyya A."/>
            <person name="Campbell J.W."/>
            <person name="Gunsalus R.P."/>
        </authorList>
    </citation>
    <scope>NUCLEOTIDE SEQUENCE [LARGE SCALE GENOMIC DNA]</scope>
    <source>
        <strain>SB</strain>
    </source>
</reference>
<evidence type="ECO:0000255" key="1">
    <source>
        <dbReference type="HAMAP-Rule" id="MF_00129"/>
    </source>
</evidence>
<evidence type="ECO:0000305" key="2"/>
<comment type="function">
    <text evidence="1">NAD-binding protein involved in the addition of a carboxymethylaminomethyl (cmnm) group at the wobble position (U34) of certain tRNAs, forming tRNA-cmnm(5)s(2)U34.</text>
</comment>
<comment type="cofactor">
    <cofactor evidence="1">
        <name>FAD</name>
        <dbReference type="ChEBI" id="CHEBI:57692"/>
    </cofactor>
</comment>
<comment type="subunit">
    <text evidence="1">Homodimer. Heterotetramer of two MnmE and two MnmG subunits.</text>
</comment>
<comment type="subcellular location">
    <subcellularLocation>
        <location evidence="1">Cytoplasm</location>
    </subcellularLocation>
</comment>
<comment type="similarity">
    <text evidence="1">Belongs to the MnmG family.</text>
</comment>
<comment type="sequence caution" evidence="2">
    <conflict type="erroneous initiation">
        <sequence resource="EMBL-CDS" id="ABC78909"/>
    </conflict>
</comment>
<proteinExistence type="inferred from homology"/>
<gene>
    <name evidence="1" type="primary">mnmG</name>
    <name evidence="1" type="synonym">gidA</name>
    <name type="ordered locus">SYNAS_30300</name>
    <name type="ORF">SYN_01650</name>
</gene>
<accession>Q2LXU8</accession>
<sequence length="639" mass="70796">MRQFDVIVVGAGHAGCEAALAASRMGCETLLFNINLDSIALMSCNPAIGGLAKGQLVKEIDALGGEMGRMADKTAVHFRILNASKGPAVQSSRVQCDKQLYRLAMKSVVERQPKLHLFQSLVDCLLVKDGQITGVADQTGVCFGAKAVVITTGTFLNGLVHVGTSHYPAGRAGEIASISLANCLRKMGFEMGRMKTGTPPRLKASTIDFSRLERQDSDPAFEPFSLSTERLGKERLPSYFGYTTSETHRLIRDNIRFSPLYSGVIKGVSARYCPSLEDKVMRFADKGRHPVVLEFEGLETEEVYAKGLGNSLPLDLQEQIVHSVPGLENSEILRSAYAIEYDFVQPTQLNHTLETKRVRGLYLAGQINGTSGYEEAAAQGMWAGINAALAVQGRPPFVLDRSEAYMGVLIDDLVTQGVDEPYRMFTSRAEYRLILREDNAALRLTPRGFDLGLIPQDLHEQISERIRRIEEGMKCLSSFKIYPGTAVNSKLEEHGSPAIKNPVTLFQLLKRTDLSWEDLSMFQDLPDFPEDVPDGYDRMIRKQIEIEAKYEGYIQRQREAVVRMKALESRRIPPGMDYSAIPGLSNELRMKLARVEPETIGQARRITGMTQAALAAVMIMIKKKEQDTRGQSPLPAQSE</sequence>
<name>MNMG_SYNAS</name>
<feature type="chain" id="PRO_0000345349" description="tRNA uridine 5-carboxymethylaminomethyl modification enzyme MnmG">
    <location>
        <begin position="1"/>
        <end position="639"/>
    </location>
</feature>
<feature type="binding site" evidence="1">
    <location>
        <begin position="10"/>
        <end position="15"/>
    </location>
    <ligand>
        <name>FAD</name>
        <dbReference type="ChEBI" id="CHEBI:57692"/>
    </ligand>
</feature>
<feature type="binding site" evidence="1">
    <location>
        <position position="122"/>
    </location>
    <ligand>
        <name>FAD</name>
        <dbReference type="ChEBI" id="CHEBI:57692"/>
    </ligand>
</feature>
<feature type="binding site" evidence="1">
    <location>
        <position position="177"/>
    </location>
    <ligand>
        <name>FAD</name>
        <dbReference type="ChEBI" id="CHEBI:57692"/>
    </ligand>
</feature>
<feature type="binding site" evidence="1">
    <location>
        <begin position="269"/>
        <end position="283"/>
    </location>
    <ligand>
        <name>NAD(+)</name>
        <dbReference type="ChEBI" id="CHEBI:57540"/>
    </ligand>
</feature>
<feature type="binding site" evidence="1">
    <location>
        <position position="366"/>
    </location>
    <ligand>
        <name>FAD</name>
        <dbReference type="ChEBI" id="CHEBI:57692"/>
    </ligand>
</feature>
<organism>
    <name type="scientific">Syntrophus aciditrophicus (strain SB)</name>
    <dbReference type="NCBI Taxonomy" id="56780"/>
    <lineage>
        <taxon>Bacteria</taxon>
        <taxon>Pseudomonadati</taxon>
        <taxon>Thermodesulfobacteriota</taxon>
        <taxon>Syntrophia</taxon>
        <taxon>Syntrophales</taxon>
        <taxon>Syntrophaceae</taxon>
        <taxon>Syntrophus</taxon>
    </lineage>
</organism>
<dbReference type="EMBL" id="CP000252">
    <property type="protein sequence ID" value="ABC78909.1"/>
    <property type="status" value="ALT_INIT"/>
    <property type="molecule type" value="Genomic_DNA"/>
</dbReference>
<dbReference type="RefSeq" id="WP_041585804.1">
    <property type="nucleotide sequence ID" value="NC_007759.1"/>
</dbReference>
<dbReference type="SMR" id="Q2LXU8"/>
<dbReference type="FunCoup" id="Q2LXU8">
    <property type="interactions" value="508"/>
</dbReference>
<dbReference type="STRING" id="56780.SYN_01650"/>
<dbReference type="KEGG" id="sat:SYN_01650"/>
<dbReference type="eggNOG" id="COG0445">
    <property type="taxonomic scope" value="Bacteria"/>
</dbReference>
<dbReference type="HOGENOM" id="CLU_007831_2_2_7"/>
<dbReference type="InParanoid" id="Q2LXU8"/>
<dbReference type="OrthoDB" id="9815560at2"/>
<dbReference type="Proteomes" id="UP000001933">
    <property type="component" value="Chromosome"/>
</dbReference>
<dbReference type="GO" id="GO:0005829">
    <property type="term" value="C:cytosol"/>
    <property type="evidence" value="ECO:0007669"/>
    <property type="project" value="TreeGrafter"/>
</dbReference>
<dbReference type="GO" id="GO:0050660">
    <property type="term" value="F:flavin adenine dinucleotide binding"/>
    <property type="evidence" value="ECO:0007669"/>
    <property type="project" value="UniProtKB-UniRule"/>
</dbReference>
<dbReference type="GO" id="GO:0030488">
    <property type="term" value="P:tRNA methylation"/>
    <property type="evidence" value="ECO:0007669"/>
    <property type="project" value="TreeGrafter"/>
</dbReference>
<dbReference type="GO" id="GO:0002098">
    <property type="term" value="P:tRNA wobble uridine modification"/>
    <property type="evidence" value="ECO:0007669"/>
    <property type="project" value="InterPro"/>
</dbReference>
<dbReference type="FunFam" id="1.10.150.570:FF:000001">
    <property type="entry name" value="tRNA uridine 5-carboxymethylaminomethyl modification enzyme MnmG"/>
    <property type="match status" value="1"/>
</dbReference>
<dbReference type="FunFam" id="3.50.50.60:FF:000002">
    <property type="entry name" value="tRNA uridine 5-carboxymethylaminomethyl modification enzyme MnmG"/>
    <property type="match status" value="1"/>
</dbReference>
<dbReference type="Gene3D" id="3.50.50.60">
    <property type="entry name" value="FAD/NAD(P)-binding domain"/>
    <property type="match status" value="2"/>
</dbReference>
<dbReference type="Gene3D" id="1.10.150.570">
    <property type="entry name" value="GidA associated domain, C-terminal subdomain"/>
    <property type="match status" value="1"/>
</dbReference>
<dbReference type="Gene3D" id="1.10.10.1800">
    <property type="entry name" value="tRNA uridine 5-carboxymethylaminomethyl modification enzyme MnmG/GidA"/>
    <property type="match status" value="1"/>
</dbReference>
<dbReference type="HAMAP" id="MF_00129">
    <property type="entry name" value="MnmG_GidA"/>
    <property type="match status" value="1"/>
</dbReference>
<dbReference type="InterPro" id="IPR036188">
    <property type="entry name" value="FAD/NAD-bd_sf"/>
</dbReference>
<dbReference type="InterPro" id="IPR049312">
    <property type="entry name" value="GIDA_C_N"/>
</dbReference>
<dbReference type="InterPro" id="IPR004416">
    <property type="entry name" value="MnmG"/>
</dbReference>
<dbReference type="InterPro" id="IPR002218">
    <property type="entry name" value="MnmG-rel"/>
</dbReference>
<dbReference type="InterPro" id="IPR020595">
    <property type="entry name" value="MnmG-rel_CS"/>
</dbReference>
<dbReference type="InterPro" id="IPR026904">
    <property type="entry name" value="MnmG_C"/>
</dbReference>
<dbReference type="InterPro" id="IPR047001">
    <property type="entry name" value="MnmG_C_subdom"/>
</dbReference>
<dbReference type="InterPro" id="IPR044920">
    <property type="entry name" value="MnmG_C_subdom_sf"/>
</dbReference>
<dbReference type="InterPro" id="IPR040131">
    <property type="entry name" value="MnmG_N"/>
</dbReference>
<dbReference type="NCBIfam" id="TIGR00136">
    <property type="entry name" value="mnmG_gidA"/>
    <property type="match status" value="1"/>
</dbReference>
<dbReference type="PANTHER" id="PTHR11806">
    <property type="entry name" value="GLUCOSE INHIBITED DIVISION PROTEIN A"/>
    <property type="match status" value="1"/>
</dbReference>
<dbReference type="PANTHER" id="PTHR11806:SF0">
    <property type="entry name" value="PROTEIN MTO1 HOMOLOG, MITOCHONDRIAL"/>
    <property type="match status" value="1"/>
</dbReference>
<dbReference type="Pfam" id="PF01134">
    <property type="entry name" value="GIDA"/>
    <property type="match status" value="1"/>
</dbReference>
<dbReference type="Pfam" id="PF21680">
    <property type="entry name" value="GIDA_C_1st"/>
    <property type="match status" value="1"/>
</dbReference>
<dbReference type="Pfam" id="PF13932">
    <property type="entry name" value="SAM_GIDA_C"/>
    <property type="match status" value="1"/>
</dbReference>
<dbReference type="PRINTS" id="PR00368">
    <property type="entry name" value="FADPNR"/>
</dbReference>
<dbReference type="PRINTS" id="PR00411">
    <property type="entry name" value="PNDRDTASEI"/>
</dbReference>
<dbReference type="SMART" id="SM01228">
    <property type="entry name" value="GIDA_assoc_3"/>
    <property type="match status" value="1"/>
</dbReference>
<dbReference type="SUPFAM" id="SSF51905">
    <property type="entry name" value="FAD/NAD(P)-binding domain"/>
    <property type="match status" value="1"/>
</dbReference>
<dbReference type="PROSITE" id="PS01280">
    <property type="entry name" value="GIDA_1"/>
    <property type="match status" value="1"/>
</dbReference>
<keyword id="KW-0963">Cytoplasm</keyword>
<keyword id="KW-0274">FAD</keyword>
<keyword id="KW-0285">Flavoprotein</keyword>
<keyword id="KW-0520">NAD</keyword>
<keyword id="KW-1185">Reference proteome</keyword>
<keyword id="KW-0819">tRNA processing</keyword>